<proteinExistence type="inferred from homology"/>
<gene>
    <name evidence="1" type="primary">egsA</name>
    <name type="ordered locus">NP_4492A</name>
</gene>
<organism>
    <name type="scientific">Natronomonas pharaonis (strain ATCC 35678 / DSM 2160 / CIP 103997 / JCM 8858 / NBRC 14720 / NCIMB 2260 / Gabara)</name>
    <name type="common">Halobacterium pharaonis</name>
    <dbReference type="NCBI Taxonomy" id="348780"/>
    <lineage>
        <taxon>Archaea</taxon>
        <taxon>Methanobacteriati</taxon>
        <taxon>Methanobacteriota</taxon>
        <taxon>Stenosarchaea group</taxon>
        <taxon>Halobacteria</taxon>
        <taxon>Halobacteriales</taxon>
        <taxon>Haloarculaceae</taxon>
        <taxon>Natronomonas</taxon>
    </lineage>
</organism>
<accession>Q3ING6</accession>
<name>G1PDH_NATPD</name>
<comment type="function">
    <text evidence="1">Catalyzes the NAD(P)H-dependent reduction of dihydroxyacetonephosphate (DHAP or glycerone phosphate) to glycerol 1-phosphate (G1P). The G1P thus generated is used as the glycerophosphate backbone of phospholipids in the cellular membranes of Archaea.</text>
</comment>
<comment type="catalytic activity">
    <reaction evidence="1">
        <text>sn-glycerol 1-phosphate + NAD(+) = dihydroxyacetone phosphate + NADH + H(+)</text>
        <dbReference type="Rhea" id="RHEA:21412"/>
        <dbReference type="ChEBI" id="CHEBI:15378"/>
        <dbReference type="ChEBI" id="CHEBI:57540"/>
        <dbReference type="ChEBI" id="CHEBI:57642"/>
        <dbReference type="ChEBI" id="CHEBI:57685"/>
        <dbReference type="ChEBI" id="CHEBI:57945"/>
        <dbReference type="EC" id="1.1.1.261"/>
    </reaction>
</comment>
<comment type="catalytic activity">
    <reaction evidence="1">
        <text>sn-glycerol 1-phosphate + NADP(+) = dihydroxyacetone phosphate + NADPH + H(+)</text>
        <dbReference type="Rhea" id="RHEA:21416"/>
        <dbReference type="ChEBI" id="CHEBI:15378"/>
        <dbReference type="ChEBI" id="CHEBI:57642"/>
        <dbReference type="ChEBI" id="CHEBI:57685"/>
        <dbReference type="ChEBI" id="CHEBI:57783"/>
        <dbReference type="ChEBI" id="CHEBI:58349"/>
        <dbReference type="EC" id="1.1.1.261"/>
    </reaction>
</comment>
<comment type="cofactor">
    <cofactor evidence="1">
        <name>Zn(2+)</name>
        <dbReference type="ChEBI" id="CHEBI:29105"/>
    </cofactor>
    <text evidence="1">Binds 1 zinc ion per subunit.</text>
</comment>
<comment type="pathway">
    <text evidence="1">Membrane lipid metabolism; glycerophospholipid metabolism.</text>
</comment>
<comment type="subcellular location">
    <subcellularLocation>
        <location evidence="1">Cytoplasm</location>
    </subcellularLocation>
</comment>
<comment type="similarity">
    <text evidence="1">Belongs to the glycerol-1-phosphate dehydrogenase family.</text>
</comment>
<protein>
    <recommendedName>
        <fullName evidence="1">Glycerol-1-phosphate dehydrogenase [NAD(P)+]</fullName>
        <shortName evidence="1">G1P dehydrogenase</shortName>
        <shortName evidence="1">G1PDH</shortName>
        <ecNumber evidence="1">1.1.1.261</ecNumber>
    </recommendedName>
    <alternativeName>
        <fullName evidence="1">Enantiomeric glycerophosphate synthase</fullName>
    </alternativeName>
    <alternativeName>
        <fullName evidence="1">sn-glycerol-1-phosphate dehydrogenase</fullName>
    </alternativeName>
</protein>
<dbReference type="EC" id="1.1.1.261" evidence="1"/>
<dbReference type="EMBL" id="CR936257">
    <property type="protein sequence ID" value="CAI50337.1"/>
    <property type="molecule type" value="Genomic_DNA"/>
</dbReference>
<dbReference type="RefSeq" id="WP_011323952.1">
    <property type="nucleotide sequence ID" value="NC_007426.1"/>
</dbReference>
<dbReference type="SMR" id="Q3ING6"/>
<dbReference type="STRING" id="348780.NP_4492A"/>
<dbReference type="EnsemblBacteria" id="CAI50337">
    <property type="protein sequence ID" value="CAI50337"/>
    <property type="gene ID" value="NP_4492A"/>
</dbReference>
<dbReference type="GeneID" id="3702751"/>
<dbReference type="KEGG" id="nph:NP_4492A"/>
<dbReference type="eggNOG" id="arCOG00982">
    <property type="taxonomic scope" value="Archaea"/>
</dbReference>
<dbReference type="HOGENOM" id="CLU_038362_0_0_2"/>
<dbReference type="OrthoDB" id="8656at2157"/>
<dbReference type="UniPathway" id="UPA00940"/>
<dbReference type="Proteomes" id="UP000002698">
    <property type="component" value="Chromosome"/>
</dbReference>
<dbReference type="GO" id="GO:0005737">
    <property type="term" value="C:cytoplasm"/>
    <property type="evidence" value="ECO:0007669"/>
    <property type="project" value="UniProtKB-SubCell"/>
</dbReference>
<dbReference type="GO" id="GO:0106357">
    <property type="term" value="F:glycerol-1-phosphate dehydrogenase (NAD+) activity"/>
    <property type="evidence" value="ECO:0007669"/>
    <property type="project" value="RHEA"/>
</dbReference>
<dbReference type="GO" id="GO:0106358">
    <property type="term" value="F:glycerol-1-phosphate dehydrogenase (NADP+) activity"/>
    <property type="evidence" value="ECO:0007669"/>
    <property type="project" value="RHEA"/>
</dbReference>
<dbReference type="GO" id="GO:0046872">
    <property type="term" value="F:metal ion binding"/>
    <property type="evidence" value="ECO:0007669"/>
    <property type="project" value="UniProtKB-KW"/>
</dbReference>
<dbReference type="GO" id="GO:0006650">
    <property type="term" value="P:glycerophospholipid metabolic process"/>
    <property type="evidence" value="ECO:0007669"/>
    <property type="project" value="UniProtKB-UniRule"/>
</dbReference>
<dbReference type="GO" id="GO:0008654">
    <property type="term" value="P:phospholipid biosynthetic process"/>
    <property type="evidence" value="ECO:0007669"/>
    <property type="project" value="UniProtKB-KW"/>
</dbReference>
<dbReference type="CDD" id="cd08173">
    <property type="entry name" value="Gro1PDH"/>
    <property type="match status" value="1"/>
</dbReference>
<dbReference type="Gene3D" id="3.40.50.1970">
    <property type="match status" value="1"/>
</dbReference>
<dbReference type="Gene3D" id="1.20.1090.10">
    <property type="entry name" value="Dehydroquinate synthase-like - alpha domain"/>
    <property type="match status" value="1"/>
</dbReference>
<dbReference type="HAMAP" id="MF_00497_A">
    <property type="entry name" value="G1P_dehydrogenase_A"/>
    <property type="match status" value="1"/>
</dbReference>
<dbReference type="InterPro" id="IPR023002">
    <property type="entry name" value="G1P_dehydrogenase_arc"/>
</dbReference>
<dbReference type="InterPro" id="IPR032837">
    <property type="entry name" value="G1PDH"/>
</dbReference>
<dbReference type="InterPro" id="IPR016205">
    <property type="entry name" value="Glycerol_DH"/>
</dbReference>
<dbReference type="NCBIfam" id="NF002022">
    <property type="entry name" value="PRK00843.1"/>
    <property type="match status" value="1"/>
</dbReference>
<dbReference type="PANTHER" id="PTHR43616">
    <property type="entry name" value="GLYCEROL DEHYDROGENASE"/>
    <property type="match status" value="1"/>
</dbReference>
<dbReference type="PANTHER" id="PTHR43616:SF5">
    <property type="entry name" value="GLYCEROL DEHYDROGENASE 1"/>
    <property type="match status" value="1"/>
</dbReference>
<dbReference type="Pfam" id="PF13685">
    <property type="entry name" value="Fe-ADH_2"/>
    <property type="match status" value="1"/>
</dbReference>
<dbReference type="PIRSF" id="PIRSF000112">
    <property type="entry name" value="Glycerol_dehydrogenase"/>
    <property type="match status" value="1"/>
</dbReference>
<dbReference type="SUPFAM" id="SSF56796">
    <property type="entry name" value="Dehydroquinate synthase-like"/>
    <property type="match status" value="1"/>
</dbReference>
<reference key="1">
    <citation type="journal article" date="2005" name="Genome Res.">
        <title>Living with two extremes: conclusions from the genome sequence of Natronomonas pharaonis.</title>
        <authorList>
            <person name="Falb M."/>
            <person name="Pfeiffer F."/>
            <person name="Palm P."/>
            <person name="Rodewald K."/>
            <person name="Hickmann V."/>
            <person name="Tittor J."/>
            <person name="Oesterhelt D."/>
        </authorList>
    </citation>
    <scope>NUCLEOTIDE SEQUENCE [LARGE SCALE GENOMIC DNA]</scope>
    <source>
        <strain>ATCC 35678 / DSM 2160 / CIP 103997 / JCM 8858 / NBRC 14720 / NCIMB 2260 / Gabara</strain>
    </source>
</reference>
<keyword id="KW-0963">Cytoplasm</keyword>
<keyword id="KW-0444">Lipid biosynthesis</keyword>
<keyword id="KW-0443">Lipid metabolism</keyword>
<keyword id="KW-0479">Metal-binding</keyword>
<keyword id="KW-0520">NAD</keyword>
<keyword id="KW-0521">NADP</keyword>
<keyword id="KW-0560">Oxidoreductase</keyword>
<keyword id="KW-0594">Phospholipid biosynthesis</keyword>
<keyword id="KW-1208">Phospholipid metabolism</keyword>
<keyword id="KW-1185">Reference proteome</keyword>
<keyword id="KW-0862">Zinc</keyword>
<feature type="chain" id="PRO_1000050605" description="Glycerol-1-phosphate dehydrogenase [NAD(P)+]">
    <location>
        <begin position="1"/>
        <end position="352"/>
    </location>
</feature>
<feature type="binding site" evidence="1">
    <location>
        <begin position="98"/>
        <end position="102"/>
    </location>
    <ligand>
        <name>NAD(+)</name>
        <dbReference type="ChEBI" id="CHEBI:57540"/>
    </ligand>
</feature>
<feature type="binding site" evidence="1">
    <location>
        <begin position="120"/>
        <end position="123"/>
    </location>
    <ligand>
        <name>NAD(+)</name>
        <dbReference type="ChEBI" id="CHEBI:57540"/>
    </ligand>
</feature>
<feature type="binding site" evidence="1">
    <location>
        <position position="125"/>
    </location>
    <ligand>
        <name>substrate</name>
    </ligand>
</feature>
<feature type="binding site" evidence="1">
    <location>
        <position position="129"/>
    </location>
    <ligand>
        <name>NAD(+)</name>
        <dbReference type="ChEBI" id="CHEBI:57540"/>
    </ligand>
</feature>
<feature type="binding site" evidence="1">
    <location>
        <position position="172"/>
    </location>
    <ligand>
        <name>substrate</name>
    </ligand>
</feature>
<feature type="binding site" evidence="1">
    <location>
        <position position="172"/>
    </location>
    <ligand>
        <name>Zn(2+)</name>
        <dbReference type="ChEBI" id="CHEBI:29105"/>
        <note>catalytic</note>
    </ligand>
</feature>
<feature type="binding site" evidence="1">
    <location>
        <position position="252"/>
    </location>
    <ligand>
        <name>Zn(2+)</name>
        <dbReference type="ChEBI" id="CHEBI:29105"/>
        <note>catalytic</note>
    </ligand>
</feature>
<feature type="binding site" evidence="1">
    <location>
        <position position="256"/>
    </location>
    <ligand>
        <name>substrate</name>
    </ligand>
</feature>
<feature type="binding site" evidence="1">
    <location>
        <position position="268"/>
    </location>
    <ligand>
        <name>Zn(2+)</name>
        <dbReference type="ChEBI" id="CHEBI:29105"/>
        <note>catalytic</note>
    </ligand>
</feature>
<sequence>MFEKSTWIRLPRSVVVGHGVLDRTAEAVEELYLDGRPLIVTSPTPEELAVDRLREQFVSAGFDPAVAVVEEASFDAVERVIETAERETAGFLVGFGGGKPIDIAKMAADERNCGFISVPTAASHDGIVSGRGSVPEGDTRHSVAAHPPLAVIADTELIANSPWRLTTAGCADIISNYTAVKDWQLAHRLKNVEYSEYAGALSQMTAEMLVDNSASIKRGLEESAWIVVKALVSSGVAMSIAGSSRPASGAEHLISHQLDRIAPETALHGHQVGVASIVTEYLHSGEGGDWRRVRDALASIDAPTTAAELGIDGERFIEATTSAHEIRDRYTILGDGIEREAAIEAAATTGVL</sequence>
<evidence type="ECO:0000255" key="1">
    <source>
        <dbReference type="HAMAP-Rule" id="MF_00497"/>
    </source>
</evidence>